<feature type="chain" id="PRO_0000210813" description="Uncharacterized phage-related protein Lin1259/Lin1739">
    <location>
        <begin position="1"/>
        <end position="141"/>
    </location>
</feature>
<proteinExistence type="predicted"/>
<sequence length="141" mass="16606">MMALFELPQINNVRTKRNVIRALEKYKIMRVRLGERRMPKLTSTLTIVPPSFNNEFHSTTEESAIWNVDAVNEAKAYVKLIDHHINQLPERSRQVILTKFIEENSDYEAMLAIHVSHSQYKEEKRKAIERLAYQLNIVVEK</sequence>
<gene>
    <name type="ordered locus">lin1259</name>
</gene>
<gene>
    <name type="ordered locus">lin1739</name>
</gene>
<name>Y1259_LISIN</name>
<protein>
    <recommendedName>
        <fullName>Uncharacterized phage-related protein Lin1259/Lin1739</fullName>
    </recommendedName>
</protein>
<accession>Q926A6</accession>
<reference key="1">
    <citation type="journal article" date="2001" name="Science">
        <title>Comparative genomics of Listeria species.</title>
        <authorList>
            <person name="Glaser P."/>
            <person name="Frangeul L."/>
            <person name="Buchrieser C."/>
            <person name="Rusniok C."/>
            <person name="Amend A."/>
            <person name="Baquero F."/>
            <person name="Berche P."/>
            <person name="Bloecker H."/>
            <person name="Brandt P."/>
            <person name="Chakraborty T."/>
            <person name="Charbit A."/>
            <person name="Chetouani F."/>
            <person name="Couve E."/>
            <person name="de Daruvar A."/>
            <person name="Dehoux P."/>
            <person name="Domann E."/>
            <person name="Dominguez-Bernal G."/>
            <person name="Duchaud E."/>
            <person name="Durant L."/>
            <person name="Dussurget O."/>
            <person name="Entian K.-D."/>
            <person name="Fsihi H."/>
            <person name="Garcia-del Portillo F."/>
            <person name="Garrido P."/>
            <person name="Gautier L."/>
            <person name="Goebel W."/>
            <person name="Gomez-Lopez N."/>
            <person name="Hain T."/>
            <person name="Hauf J."/>
            <person name="Jackson D."/>
            <person name="Jones L.-M."/>
            <person name="Kaerst U."/>
            <person name="Kreft J."/>
            <person name="Kuhn M."/>
            <person name="Kunst F."/>
            <person name="Kurapkat G."/>
            <person name="Madueno E."/>
            <person name="Maitournam A."/>
            <person name="Mata Vicente J."/>
            <person name="Ng E."/>
            <person name="Nedjari H."/>
            <person name="Nordsiek G."/>
            <person name="Novella S."/>
            <person name="de Pablos B."/>
            <person name="Perez-Diaz J.-C."/>
            <person name="Purcell R."/>
            <person name="Remmel B."/>
            <person name="Rose M."/>
            <person name="Schlueter T."/>
            <person name="Simoes N."/>
            <person name="Tierrez A."/>
            <person name="Vazquez-Boland J.-A."/>
            <person name="Voss H."/>
            <person name="Wehland J."/>
            <person name="Cossart P."/>
        </authorList>
    </citation>
    <scope>NUCLEOTIDE SEQUENCE [LARGE SCALE GENOMIC DNA]</scope>
    <source>
        <strain>ATCC BAA-680 / CLIP 11262</strain>
    </source>
</reference>
<dbReference type="EMBL" id="AL596168">
    <property type="protein sequence ID" value="CAC96490.1"/>
    <property type="molecule type" value="Genomic_DNA"/>
</dbReference>
<dbReference type="EMBL" id="AL596169">
    <property type="protein sequence ID" value="CAC96970.1"/>
    <property type="molecule type" value="Genomic_DNA"/>
</dbReference>
<dbReference type="PIR" id="AB1590">
    <property type="entry name" value="AB1590"/>
</dbReference>
<dbReference type="PIR" id="AB1650">
    <property type="entry name" value="AB1650"/>
</dbReference>
<dbReference type="SMR" id="Q926A6"/>
<dbReference type="STRING" id="272626.gene:17565590"/>
<dbReference type="KEGG" id="lin:lin1259"/>
<dbReference type="KEGG" id="lin:lin1739"/>
<dbReference type="eggNOG" id="COG0677">
    <property type="taxonomic scope" value="Bacteria"/>
</dbReference>
<dbReference type="HOGENOM" id="CLU_107917_2_1_9"/>
<dbReference type="Proteomes" id="UP000002513">
    <property type="component" value="Chromosome"/>
</dbReference>
<dbReference type="InterPro" id="IPR006524">
    <property type="entry name" value="ArpU-like"/>
</dbReference>
<dbReference type="InterPro" id="IPR013324">
    <property type="entry name" value="RNA_pol_sigma_r3/r4-like"/>
</dbReference>
<dbReference type="NCBIfam" id="TIGR01637">
    <property type="entry name" value="phage_arpU"/>
    <property type="match status" value="1"/>
</dbReference>
<dbReference type="SUPFAM" id="SSF88659">
    <property type="entry name" value="Sigma3 and sigma4 domains of RNA polymerase sigma factors"/>
    <property type="match status" value="1"/>
</dbReference>
<organism>
    <name type="scientific">Listeria innocua serovar 6a (strain ATCC BAA-680 / CLIP 11262)</name>
    <dbReference type="NCBI Taxonomy" id="272626"/>
    <lineage>
        <taxon>Bacteria</taxon>
        <taxon>Bacillati</taxon>
        <taxon>Bacillota</taxon>
        <taxon>Bacilli</taxon>
        <taxon>Bacillales</taxon>
        <taxon>Listeriaceae</taxon>
        <taxon>Listeria</taxon>
    </lineage>
</organism>